<protein>
    <recommendedName>
        <fullName evidence="1">Transcription antitermination protein NusB</fullName>
    </recommendedName>
    <alternativeName>
        <fullName evidence="1">Antitermination factor NusB</fullName>
    </alternativeName>
</protein>
<name>NUSB_BURPS</name>
<gene>
    <name evidence="1" type="primary">nusB</name>
    <name type="ordered locus">BPSL2628</name>
</gene>
<proteinExistence type="inferred from homology"/>
<evidence type="ECO:0000255" key="1">
    <source>
        <dbReference type="HAMAP-Rule" id="MF_00073"/>
    </source>
</evidence>
<keyword id="KW-1185">Reference proteome</keyword>
<keyword id="KW-0694">RNA-binding</keyword>
<keyword id="KW-0804">Transcription</keyword>
<keyword id="KW-0889">Transcription antitermination</keyword>
<keyword id="KW-0805">Transcription regulation</keyword>
<accession>Q63RP4</accession>
<feature type="chain" id="PRO_0000265497" description="Transcription antitermination protein NusB">
    <location>
        <begin position="1"/>
        <end position="145"/>
    </location>
</feature>
<sequence length="145" mass="15981">MKKSARRQSRELATQGLYQWLLSNAAPGEIDAQLRGALGYDKADKTLLDTILHGVIREHATLAEAISPSLDRPIDQLSPVERAVLLIATYELTHQIETPYRVIINEAVELAKTFGGSDGYKYVNGVLDKLAVKLRPAETQARRGA</sequence>
<reference key="1">
    <citation type="journal article" date="2004" name="Proc. Natl. Acad. Sci. U.S.A.">
        <title>Genomic plasticity of the causative agent of melioidosis, Burkholderia pseudomallei.</title>
        <authorList>
            <person name="Holden M.T.G."/>
            <person name="Titball R.W."/>
            <person name="Peacock S.J."/>
            <person name="Cerdeno-Tarraga A.-M."/>
            <person name="Atkins T."/>
            <person name="Crossman L.C."/>
            <person name="Pitt T."/>
            <person name="Churcher C."/>
            <person name="Mungall K.L."/>
            <person name="Bentley S.D."/>
            <person name="Sebaihia M."/>
            <person name="Thomson N.R."/>
            <person name="Bason N."/>
            <person name="Beacham I.R."/>
            <person name="Brooks K."/>
            <person name="Brown K.A."/>
            <person name="Brown N.F."/>
            <person name="Challis G.L."/>
            <person name="Cherevach I."/>
            <person name="Chillingworth T."/>
            <person name="Cronin A."/>
            <person name="Crossett B."/>
            <person name="Davis P."/>
            <person name="DeShazer D."/>
            <person name="Feltwell T."/>
            <person name="Fraser A."/>
            <person name="Hance Z."/>
            <person name="Hauser H."/>
            <person name="Holroyd S."/>
            <person name="Jagels K."/>
            <person name="Keith K.E."/>
            <person name="Maddison M."/>
            <person name="Moule S."/>
            <person name="Price C."/>
            <person name="Quail M.A."/>
            <person name="Rabbinowitsch E."/>
            <person name="Rutherford K."/>
            <person name="Sanders M."/>
            <person name="Simmonds M."/>
            <person name="Songsivilai S."/>
            <person name="Stevens K."/>
            <person name="Tumapa S."/>
            <person name="Vesaratchavest M."/>
            <person name="Whitehead S."/>
            <person name="Yeats C."/>
            <person name="Barrell B.G."/>
            <person name="Oyston P.C.F."/>
            <person name="Parkhill J."/>
        </authorList>
    </citation>
    <scope>NUCLEOTIDE SEQUENCE [LARGE SCALE GENOMIC DNA]</scope>
    <source>
        <strain>K96243</strain>
    </source>
</reference>
<comment type="function">
    <text evidence="1">Involved in transcription antitermination. Required for transcription of ribosomal RNA (rRNA) genes. Binds specifically to the boxA antiterminator sequence of the ribosomal RNA (rrn) operons.</text>
</comment>
<comment type="similarity">
    <text evidence="1">Belongs to the NusB family.</text>
</comment>
<organism>
    <name type="scientific">Burkholderia pseudomallei (strain K96243)</name>
    <dbReference type="NCBI Taxonomy" id="272560"/>
    <lineage>
        <taxon>Bacteria</taxon>
        <taxon>Pseudomonadati</taxon>
        <taxon>Pseudomonadota</taxon>
        <taxon>Betaproteobacteria</taxon>
        <taxon>Burkholderiales</taxon>
        <taxon>Burkholderiaceae</taxon>
        <taxon>Burkholderia</taxon>
        <taxon>pseudomallei group</taxon>
    </lineage>
</organism>
<dbReference type="EMBL" id="BX571965">
    <property type="protein sequence ID" value="CAH36636.1"/>
    <property type="molecule type" value="Genomic_DNA"/>
</dbReference>
<dbReference type="RefSeq" id="WP_004185707.1">
    <property type="nucleotide sequence ID" value="NZ_CP009538.1"/>
</dbReference>
<dbReference type="RefSeq" id="YP_109224.1">
    <property type="nucleotide sequence ID" value="NC_006350.1"/>
</dbReference>
<dbReference type="SMR" id="Q63RP4"/>
<dbReference type="STRING" id="272560.BPSL2628"/>
<dbReference type="GeneID" id="93061205"/>
<dbReference type="KEGG" id="bps:BPSL2628"/>
<dbReference type="PATRIC" id="fig|272560.51.peg.2724"/>
<dbReference type="eggNOG" id="COG0781">
    <property type="taxonomic scope" value="Bacteria"/>
</dbReference>
<dbReference type="Proteomes" id="UP000000605">
    <property type="component" value="Chromosome 1"/>
</dbReference>
<dbReference type="GO" id="GO:0005829">
    <property type="term" value="C:cytosol"/>
    <property type="evidence" value="ECO:0007669"/>
    <property type="project" value="TreeGrafter"/>
</dbReference>
<dbReference type="GO" id="GO:0003723">
    <property type="term" value="F:RNA binding"/>
    <property type="evidence" value="ECO:0007669"/>
    <property type="project" value="UniProtKB-UniRule"/>
</dbReference>
<dbReference type="GO" id="GO:0006353">
    <property type="term" value="P:DNA-templated transcription termination"/>
    <property type="evidence" value="ECO:0007669"/>
    <property type="project" value="UniProtKB-UniRule"/>
</dbReference>
<dbReference type="GO" id="GO:0031564">
    <property type="term" value="P:transcription antitermination"/>
    <property type="evidence" value="ECO:0007669"/>
    <property type="project" value="UniProtKB-KW"/>
</dbReference>
<dbReference type="Gene3D" id="1.10.940.10">
    <property type="entry name" value="NusB-like"/>
    <property type="match status" value="1"/>
</dbReference>
<dbReference type="HAMAP" id="MF_00073">
    <property type="entry name" value="NusB"/>
    <property type="match status" value="1"/>
</dbReference>
<dbReference type="InterPro" id="IPR035926">
    <property type="entry name" value="NusB-like_sf"/>
</dbReference>
<dbReference type="InterPro" id="IPR011605">
    <property type="entry name" value="NusB_fam"/>
</dbReference>
<dbReference type="InterPro" id="IPR006027">
    <property type="entry name" value="NusB_RsmB_TIM44"/>
</dbReference>
<dbReference type="NCBIfam" id="TIGR01951">
    <property type="entry name" value="nusB"/>
    <property type="match status" value="1"/>
</dbReference>
<dbReference type="PANTHER" id="PTHR11078:SF3">
    <property type="entry name" value="ANTITERMINATION NUSB DOMAIN-CONTAINING PROTEIN"/>
    <property type="match status" value="1"/>
</dbReference>
<dbReference type="PANTHER" id="PTHR11078">
    <property type="entry name" value="N UTILIZATION SUBSTANCE PROTEIN B-RELATED"/>
    <property type="match status" value="1"/>
</dbReference>
<dbReference type="Pfam" id="PF01029">
    <property type="entry name" value="NusB"/>
    <property type="match status" value="1"/>
</dbReference>
<dbReference type="SUPFAM" id="SSF48013">
    <property type="entry name" value="NusB-like"/>
    <property type="match status" value="1"/>
</dbReference>